<protein>
    <recommendedName>
        <fullName evidence="1">Protein-L-isoaspartate O-methyltransferase</fullName>
        <ecNumber evidence="1">2.1.1.77</ecNumber>
    </recommendedName>
    <alternativeName>
        <fullName evidence="1">L-isoaspartyl protein carboxyl methyltransferase</fullName>
    </alternativeName>
    <alternativeName>
        <fullName evidence="1">Protein L-isoaspartyl methyltransferase</fullName>
    </alternativeName>
    <alternativeName>
        <fullName evidence="1">Protein-beta-aspartate methyltransferase</fullName>
        <shortName evidence="1">PIMT</shortName>
    </alternativeName>
</protein>
<evidence type="ECO:0000255" key="1">
    <source>
        <dbReference type="HAMAP-Rule" id="MF_00090"/>
    </source>
</evidence>
<evidence type="ECO:0000305" key="2"/>
<comment type="function">
    <text evidence="1">Catalyzes the methyl esterification of L-isoaspartyl residues in peptides and proteins that result from spontaneous decomposition of normal L-aspartyl and L-asparaginyl residues. It plays a role in the repair and/or degradation of damaged proteins.</text>
</comment>
<comment type="catalytic activity">
    <reaction evidence="1">
        <text>[protein]-L-isoaspartate + S-adenosyl-L-methionine = [protein]-L-isoaspartate alpha-methyl ester + S-adenosyl-L-homocysteine</text>
        <dbReference type="Rhea" id="RHEA:12705"/>
        <dbReference type="Rhea" id="RHEA-COMP:12143"/>
        <dbReference type="Rhea" id="RHEA-COMP:12144"/>
        <dbReference type="ChEBI" id="CHEBI:57856"/>
        <dbReference type="ChEBI" id="CHEBI:59789"/>
        <dbReference type="ChEBI" id="CHEBI:90596"/>
        <dbReference type="ChEBI" id="CHEBI:90598"/>
        <dbReference type="EC" id="2.1.1.77"/>
    </reaction>
</comment>
<comment type="subcellular location">
    <subcellularLocation>
        <location evidence="1">Cytoplasm</location>
    </subcellularLocation>
</comment>
<comment type="similarity">
    <text evidence="1">Belongs to the methyltransferase superfamily. L-isoaspartyl/D-aspartyl protein methyltransferase family.</text>
</comment>
<comment type="sequence caution" evidence="2">
    <conflict type="erroneous initiation">
        <sequence resource="EMBL-CDS" id="ABA72873"/>
    </conflict>
</comment>
<sequence>MTSQRTRERLIQRLYEEGVSNASVLEVIRRTPRHLFVDEALAHRAYEDTALPIGNNQTISQPYMVARMSELLLEAGPLDKVLEIGTGSGYQTAVLSQLVERVFSVERIKVLQDRAKERLIELNLRNVVFRWGDGWEGWPALAPYNGIIVTAVATDVPQALLDQLAPGGRMVIPVGSGEVQQLMLIVREENGFSRHVLGAVRFVPLLNGPLA</sequence>
<feature type="chain" id="PRO_0000351908" description="Protein-L-isoaspartate O-methyltransferase">
    <location>
        <begin position="1"/>
        <end position="211"/>
    </location>
</feature>
<feature type="active site" evidence="1">
    <location>
        <position position="60"/>
    </location>
</feature>
<dbReference type="EC" id="2.1.1.77" evidence="1"/>
<dbReference type="EMBL" id="CP000094">
    <property type="protein sequence ID" value="ABA72873.1"/>
    <property type="status" value="ALT_INIT"/>
    <property type="molecule type" value="Genomic_DNA"/>
</dbReference>
<dbReference type="SMR" id="Q3KH83"/>
<dbReference type="KEGG" id="pfo:Pfl01_1130"/>
<dbReference type="eggNOG" id="COG2518">
    <property type="taxonomic scope" value="Bacteria"/>
</dbReference>
<dbReference type="HOGENOM" id="CLU_055432_2_0_6"/>
<dbReference type="Proteomes" id="UP000002704">
    <property type="component" value="Chromosome"/>
</dbReference>
<dbReference type="GO" id="GO:0005737">
    <property type="term" value="C:cytoplasm"/>
    <property type="evidence" value="ECO:0007669"/>
    <property type="project" value="UniProtKB-SubCell"/>
</dbReference>
<dbReference type="GO" id="GO:0004719">
    <property type="term" value="F:protein-L-isoaspartate (D-aspartate) O-methyltransferase activity"/>
    <property type="evidence" value="ECO:0007669"/>
    <property type="project" value="UniProtKB-UniRule"/>
</dbReference>
<dbReference type="GO" id="GO:0032259">
    <property type="term" value="P:methylation"/>
    <property type="evidence" value="ECO:0007669"/>
    <property type="project" value="UniProtKB-KW"/>
</dbReference>
<dbReference type="GO" id="GO:0036211">
    <property type="term" value="P:protein modification process"/>
    <property type="evidence" value="ECO:0007669"/>
    <property type="project" value="UniProtKB-UniRule"/>
</dbReference>
<dbReference type="GO" id="GO:0030091">
    <property type="term" value="P:protein repair"/>
    <property type="evidence" value="ECO:0007669"/>
    <property type="project" value="UniProtKB-UniRule"/>
</dbReference>
<dbReference type="CDD" id="cd02440">
    <property type="entry name" value="AdoMet_MTases"/>
    <property type="match status" value="1"/>
</dbReference>
<dbReference type="FunFam" id="3.40.50.150:FF:000010">
    <property type="entry name" value="Protein-L-isoaspartate O-methyltransferase"/>
    <property type="match status" value="1"/>
</dbReference>
<dbReference type="Gene3D" id="3.40.50.150">
    <property type="entry name" value="Vaccinia Virus protein VP39"/>
    <property type="match status" value="1"/>
</dbReference>
<dbReference type="HAMAP" id="MF_00090">
    <property type="entry name" value="PIMT"/>
    <property type="match status" value="1"/>
</dbReference>
<dbReference type="InterPro" id="IPR000682">
    <property type="entry name" value="PCMT"/>
</dbReference>
<dbReference type="InterPro" id="IPR029063">
    <property type="entry name" value="SAM-dependent_MTases_sf"/>
</dbReference>
<dbReference type="NCBIfam" id="TIGR00080">
    <property type="entry name" value="pimt"/>
    <property type="match status" value="1"/>
</dbReference>
<dbReference type="NCBIfam" id="NF001453">
    <property type="entry name" value="PRK00312.1"/>
    <property type="match status" value="1"/>
</dbReference>
<dbReference type="PANTHER" id="PTHR11579">
    <property type="entry name" value="PROTEIN-L-ISOASPARTATE O-METHYLTRANSFERASE"/>
    <property type="match status" value="1"/>
</dbReference>
<dbReference type="PANTHER" id="PTHR11579:SF0">
    <property type="entry name" value="PROTEIN-L-ISOASPARTATE(D-ASPARTATE) O-METHYLTRANSFERASE"/>
    <property type="match status" value="1"/>
</dbReference>
<dbReference type="Pfam" id="PF01135">
    <property type="entry name" value="PCMT"/>
    <property type="match status" value="1"/>
</dbReference>
<dbReference type="SUPFAM" id="SSF53335">
    <property type="entry name" value="S-adenosyl-L-methionine-dependent methyltransferases"/>
    <property type="match status" value="1"/>
</dbReference>
<dbReference type="PROSITE" id="PS01279">
    <property type="entry name" value="PCMT"/>
    <property type="match status" value="1"/>
</dbReference>
<reference key="1">
    <citation type="journal article" date="2009" name="Genome Biol.">
        <title>Genomic and genetic analyses of diversity and plant interactions of Pseudomonas fluorescens.</title>
        <authorList>
            <person name="Silby M.W."/>
            <person name="Cerdeno-Tarraga A.M."/>
            <person name="Vernikos G.S."/>
            <person name="Giddens S.R."/>
            <person name="Jackson R.W."/>
            <person name="Preston G.M."/>
            <person name="Zhang X.-X."/>
            <person name="Moon C.D."/>
            <person name="Gehrig S.M."/>
            <person name="Godfrey S.A.C."/>
            <person name="Knight C.G."/>
            <person name="Malone J.G."/>
            <person name="Robinson Z."/>
            <person name="Spiers A.J."/>
            <person name="Harris S."/>
            <person name="Challis G.L."/>
            <person name="Yaxley A.M."/>
            <person name="Harris D."/>
            <person name="Seeger K."/>
            <person name="Murphy L."/>
            <person name="Rutter S."/>
            <person name="Squares R."/>
            <person name="Quail M.A."/>
            <person name="Saunders E."/>
            <person name="Mavromatis K."/>
            <person name="Brettin T.S."/>
            <person name="Bentley S.D."/>
            <person name="Hothersall J."/>
            <person name="Stephens E."/>
            <person name="Thomas C.M."/>
            <person name="Parkhill J."/>
            <person name="Levy S.B."/>
            <person name="Rainey P.B."/>
            <person name="Thomson N.R."/>
        </authorList>
    </citation>
    <scope>NUCLEOTIDE SEQUENCE [LARGE SCALE GENOMIC DNA]</scope>
    <source>
        <strain>Pf0-1</strain>
    </source>
</reference>
<gene>
    <name evidence="1" type="primary">pcm</name>
    <name type="ordered locus">Pfl01_1130</name>
</gene>
<proteinExistence type="inferred from homology"/>
<name>PIMT_PSEPF</name>
<organism>
    <name type="scientific">Pseudomonas fluorescens (strain Pf0-1)</name>
    <dbReference type="NCBI Taxonomy" id="205922"/>
    <lineage>
        <taxon>Bacteria</taxon>
        <taxon>Pseudomonadati</taxon>
        <taxon>Pseudomonadota</taxon>
        <taxon>Gammaproteobacteria</taxon>
        <taxon>Pseudomonadales</taxon>
        <taxon>Pseudomonadaceae</taxon>
        <taxon>Pseudomonas</taxon>
    </lineage>
</organism>
<keyword id="KW-0963">Cytoplasm</keyword>
<keyword id="KW-0489">Methyltransferase</keyword>
<keyword id="KW-0949">S-adenosyl-L-methionine</keyword>
<keyword id="KW-0808">Transferase</keyword>
<accession>Q3KH83</accession>